<reference key="1">
    <citation type="journal article" date="2001" name="Nature">
        <title>Complete genome sequence of Salmonella enterica serovar Typhimurium LT2.</title>
        <authorList>
            <person name="McClelland M."/>
            <person name="Sanderson K.E."/>
            <person name="Spieth J."/>
            <person name="Clifton S.W."/>
            <person name="Latreille P."/>
            <person name="Courtney L."/>
            <person name="Porwollik S."/>
            <person name="Ali J."/>
            <person name="Dante M."/>
            <person name="Du F."/>
            <person name="Hou S."/>
            <person name="Layman D."/>
            <person name="Leonard S."/>
            <person name="Nguyen C."/>
            <person name="Scott K."/>
            <person name="Holmes A."/>
            <person name="Grewal N."/>
            <person name="Mulvaney E."/>
            <person name="Ryan E."/>
            <person name="Sun H."/>
            <person name="Florea L."/>
            <person name="Miller W."/>
            <person name="Stoneking T."/>
            <person name="Nhan M."/>
            <person name="Waterston R."/>
            <person name="Wilson R.K."/>
        </authorList>
    </citation>
    <scope>NUCLEOTIDE SEQUENCE [LARGE SCALE GENOMIC DNA]</scope>
    <source>
        <strain>LT2 / SGSC1412 / ATCC 700720</strain>
    </source>
</reference>
<keyword id="KW-0032">Aminotransferase</keyword>
<keyword id="KW-1185">Reference proteome</keyword>
<keyword id="KW-0808">Transferase</keyword>
<sequence length="364" mass="40217">MAQQTPLYEQHTLCGARMVDFHGWMMPLHYGSQLDEHHAVRTDAGMFDVSHMTIVDLHGSRTREFLRYLLANDVAKLTKTGKALYSGMLNASGGVIDDLIVYYFTEDFFRLVVNSATREKDLSWITQHAEPYAIDITVRDDLSLIAVQGPNAQEKAATLFTDQQRHAVEGMKPFFGVQAGDLFIATTGYTGEAGYEIAMPNEKAADFWRALVEAGVKPCGLGARDTLRLEAGMNLYGQEMDEGISPLAANMGWTIAWEPADRDFIGREALEMQREKGHEQLVGLVMTEKGVLRNELPVRFTDAQGNQQEGIITSGTFSPTLGYSIALARVPAGIGETAIVQIRNREMPVKVTKPVFVRNGKAVA</sequence>
<comment type="function">
    <text evidence="1">The glycine cleavage system catalyzes the degradation of glycine.</text>
</comment>
<comment type="catalytic activity">
    <reaction evidence="1">
        <text>N(6)-[(R)-S(8)-aminomethyldihydrolipoyl]-L-lysyl-[protein] + (6S)-5,6,7,8-tetrahydrofolate = N(6)-[(R)-dihydrolipoyl]-L-lysyl-[protein] + (6R)-5,10-methylene-5,6,7,8-tetrahydrofolate + NH4(+)</text>
        <dbReference type="Rhea" id="RHEA:16945"/>
        <dbReference type="Rhea" id="RHEA-COMP:10475"/>
        <dbReference type="Rhea" id="RHEA-COMP:10492"/>
        <dbReference type="ChEBI" id="CHEBI:15636"/>
        <dbReference type="ChEBI" id="CHEBI:28938"/>
        <dbReference type="ChEBI" id="CHEBI:57453"/>
        <dbReference type="ChEBI" id="CHEBI:83100"/>
        <dbReference type="ChEBI" id="CHEBI:83143"/>
        <dbReference type="EC" id="2.1.2.10"/>
    </reaction>
</comment>
<comment type="subunit">
    <text evidence="1">The glycine cleavage system is composed of four proteins: P, T, L and H.</text>
</comment>
<comment type="similarity">
    <text evidence="1">Belongs to the GcvT family.</text>
</comment>
<accession>P64222</accession>
<accession>Q8XG67</accession>
<organism>
    <name type="scientific">Salmonella typhimurium (strain LT2 / SGSC1412 / ATCC 700720)</name>
    <dbReference type="NCBI Taxonomy" id="99287"/>
    <lineage>
        <taxon>Bacteria</taxon>
        <taxon>Pseudomonadati</taxon>
        <taxon>Pseudomonadota</taxon>
        <taxon>Gammaproteobacteria</taxon>
        <taxon>Enterobacterales</taxon>
        <taxon>Enterobacteriaceae</taxon>
        <taxon>Salmonella</taxon>
    </lineage>
</organism>
<gene>
    <name evidence="1" type="primary">gcvT</name>
    <name type="ordered locus">STM3055</name>
</gene>
<protein>
    <recommendedName>
        <fullName evidence="1">Aminomethyltransferase</fullName>
        <ecNumber evidence="1">2.1.2.10</ecNumber>
    </recommendedName>
    <alternativeName>
        <fullName evidence="1">Glycine cleavage system T protein</fullName>
    </alternativeName>
</protein>
<proteinExistence type="inferred from homology"/>
<feature type="chain" id="PRO_0000122592" description="Aminomethyltransferase">
    <location>
        <begin position="1"/>
        <end position="364"/>
    </location>
</feature>
<name>GCST_SALTY</name>
<evidence type="ECO:0000255" key="1">
    <source>
        <dbReference type="HAMAP-Rule" id="MF_00259"/>
    </source>
</evidence>
<dbReference type="EC" id="2.1.2.10" evidence="1"/>
<dbReference type="EMBL" id="AE006468">
    <property type="protein sequence ID" value="AAL21930.1"/>
    <property type="molecule type" value="Genomic_DNA"/>
</dbReference>
<dbReference type="RefSeq" id="NP_461971.1">
    <property type="nucleotide sequence ID" value="NC_003197.2"/>
</dbReference>
<dbReference type="RefSeq" id="WP_000068738.1">
    <property type="nucleotide sequence ID" value="NC_003197.2"/>
</dbReference>
<dbReference type="SMR" id="P64222"/>
<dbReference type="STRING" id="99287.STM3055"/>
<dbReference type="PaxDb" id="99287-STM3055"/>
<dbReference type="GeneID" id="1254578"/>
<dbReference type="KEGG" id="stm:STM3055"/>
<dbReference type="PATRIC" id="fig|99287.12.peg.3236"/>
<dbReference type="HOGENOM" id="CLU_007884_10_2_6"/>
<dbReference type="OMA" id="MPVQYPA"/>
<dbReference type="PhylomeDB" id="P64222"/>
<dbReference type="BioCyc" id="SENT99287:STM3055-MONOMER"/>
<dbReference type="Proteomes" id="UP000001014">
    <property type="component" value="Chromosome"/>
</dbReference>
<dbReference type="GO" id="GO:0005829">
    <property type="term" value="C:cytosol"/>
    <property type="evidence" value="ECO:0000318"/>
    <property type="project" value="GO_Central"/>
</dbReference>
<dbReference type="GO" id="GO:0005960">
    <property type="term" value="C:glycine cleavage complex"/>
    <property type="evidence" value="ECO:0007669"/>
    <property type="project" value="InterPro"/>
</dbReference>
<dbReference type="GO" id="GO:0004047">
    <property type="term" value="F:aminomethyltransferase activity"/>
    <property type="evidence" value="ECO:0007669"/>
    <property type="project" value="UniProtKB-UniRule"/>
</dbReference>
<dbReference type="GO" id="GO:0008483">
    <property type="term" value="F:transaminase activity"/>
    <property type="evidence" value="ECO:0007669"/>
    <property type="project" value="UniProtKB-KW"/>
</dbReference>
<dbReference type="GO" id="GO:0019464">
    <property type="term" value="P:glycine decarboxylation via glycine cleavage system"/>
    <property type="evidence" value="ECO:0007669"/>
    <property type="project" value="UniProtKB-UniRule"/>
</dbReference>
<dbReference type="FunFam" id="2.40.30.110:FF:000001">
    <property type="entry name" value="Aminomethyltransferase"/>
    <property type="match status" value="1"/>
</dbReference>
<dbReference type="FunFam" id="3.30.70.1400:FF:000001">
    <property type="entry name" value="Aminomethyltransferase"/>
    <property type="match status" value="1"/>
</dbReference>
<dbReference type="FunFam" id="4.10.1250.10:FF:000001">
    <property type="entry name" value="Aminomethyltransferase"/>
    <property type="match status" value="1"/>
</dbReference>
<dbReference type="Gene3D" id="2.40.30.110">
    <property type="entry name" value="Aminomethyltransferase beta-barrel domains"/>
    <property type="match status" value="1"/>
</dbReference>
<dbReference type="Gene3D" id="3.30.70.1400">
    <property type="entry name" value="Aminomethyltransferase beta-barrel domains"/>
    <property type="match status" value="1"/>
</dbReference>
<dbReference type="Gene3D" id="4.10.1250.10">
    <property type="entry name" value="Aminomethyltransferase fragment"/>
    <property type="match status" value="1"/>
</dbReference>
<dbReference type="Gene3D" id="3.30.1360.120">
    <property type="entry name" value="Probable tRNA modification gtpase trme, domain 1"/>
    <property type="match status" value="1"/>
</dbReference>
<dbReference type="HAMAP" id="MF_00259">
    <property type="entry name" value="GcvT"/>
    <property type="match status" value="1"/>
</dbReference>
<dbReference type="InterPro" id="IPR006223">
    <property type="entry name" value="GCS_T"/>
</dbReference>
<dbReference type="InterPro" id="IPR022903">
    <property type="entry name" value="GCS_T_bac"/>
</dbReference>
<dbReference type="InterPro" id="IPR013977">
    <property type="entry name" value="GCST_C"/>
</dbReference>
<dbReference type="InterPro" id="IPR006222">
    <property type="entry name" value="GCV_T_N"/>
</dbReference>
<dbReference type="InterPro" id="IPR028896">
    <property type="entry name" value="GcvT/YgfZ/DmdA"/>
</dbReference>
<dbReference type="InterPro" id="IPR029043">
    <property type="entry name" value="GcvT/YgfZ_C"/>
</dbReference>
<dbReference type="InterPro" id="IPR027266">
    <property type="entry name" value="TrmE/GcvT_dom1"/>
</dbReference>
<dbReference type="NCBIfam" id="TIGR00528">
    <property type="entry name" value="gcvT"/>
    <property type="match status" value="1"/>
</dbReference>
<dbReference type="NCBIfam" id="NF001567">
    <property type="entry name" value="PRK00389.1"/>
    <property type="match status" value="1"/>
</dbReference>
<dbReference type="PANTHER" id="PTHR43757">
    <property type="entry name" value="AMINOMETHYLTRANSFERASE"/>
    <property type="match status" value="1"/>
</dbReference>
<dbReference type="PANTHER" id="PTHR43757:SF2">
    <property type="entry name" value="AMINOMETHYLTRANSFERASE, MITOCHONDRIAL"/>
    <property type="match status" value="1"/>
</dbReference>
<dbReference type="Pfam" id="PF01571">
    <property type="entry name" value="GCV_T"/>
    <property type="match status" value="1"/>
</dbReference>
<dbReference type="Pfam" id="PF08669">
    <property type="entry name" value="GCV_T_C"/>
    <property type="match status" value="1"/>
</dbReference>
<dbReference type="PIRSF" id="PIRSF006487">
    <property type="entry name" value="GcvT"/>
    <property type="match status" value="1"/>
</dbReference>
<dbReference type="SUPFAM" id="SSF101790">
    <property type="entry name" value="Aminomethyltransferase beta-barrel domain"/>
    <property type="match status" value="1"/>
</dbReference>
<dbReference type="SUPFAM" id="SSF103025">
    <property type="entry name" value="Folate-binding domain"/>
    <property type="match status" value="1"/>
</dbReference>